<evidence type="ECO:0000250" key="1"/>
<evidence type="ECO:0000255" key="2">
    <source>
        <dbReference type="PROSITE-ProRule" id="PRU00335"/>
    </source>
</evidence>
<gene>
    <name type="primary">envR</name>
    <name type="ordered locus">Z4624</name>
    <name type="ordered locus">ECs4136</name>
</gene>
<reference key="1">
    <citation type="journal article" date="2001" name="Nature">
        <title>Genome sequence of enterohaemorrhagic Escherichia coli O157:H7.</title>
        <authorList>
            <person name="Perna N.T."/>
            <person name="Plunkett G. III"/>
            <person name="Burland V."/>
            <person name="Mau B."/>
            <person name="Glasner J.D."/>
            <person name="Rose D.J."/>
            <person name="Mayhew G.F."/>
            <person name="Evans P.S."/>
            <person name="Gregor J."/>
            <person name="Kirkpatrick H.A."/>
            <person name="Posfai G."/>
            <person name="Hackett J."/>
            <person name="Klink S."/>
            <person name="Boutin A."/>
            <person name="Shao Y."/>
            <person name="Miller L."/>
            <person name="Grotbeck E.J."/>
            <person name="Davis N.W."/>
            <person name="Lim A."/>
            <person name="Dimalanta E.T."/>
            <person name="Potamousis K."/>
            <person name="Apodaca J."/>
            <person name="Anantharaman T.S."/>
            <person name="Lin J."/>
            <person name="Yen G."/>
            <person name="Schwartz D.C."/>
            <person name="Welch R.A."/>
            <person name="Blattner F.R."/>
        </authorList>
    </citation>
    <scope>NUCLEOTIDE SEQUENCE [LARGE SCALE GENOMIC DNA]</scope>
    <source>
        <strain>O157:H7 / EDL933 / ATCC 700927 / EHEC</strain>
    </source>
</reference>
<reference key="2">
    <citation type="journal article" date="2001" name="DNA Res.">
        <title>Complete genome sequence of enterohemorrhagic Escherichia coli O157:H7 and genomic comparison with a laboratory strain K-12.</title>
        <authorList>
            <person name="Hayashi T."/>
            <person name="Makino K."/>
            <person name="Ohnishi M."/>
            <person name="Kurokawa K."/>
            <person name="Ishii K."/>
            <person name="Yokoyama K."/>
            <person name="Han C.-G."/>
            <person name="Ohtsubo E."/>
            <person name="Nakayama K."/>
            <person name="Murata T."/>
            <person name="Tanaka M."/>
            <person name="Tobe T."/>
            <person name="Iida T."/>
            <person name="Takami H."/>
            <person name="Honda T."/>
            <person name="Sasakawa C."/>
            <person name="Ogasawara N."/>
            <person name="Yasunaga T."/>
            <person name="Kuhara S."/>
            <person name="Shiba T."/>
            <person name="Hattori M."/>
            <person name="Shinagawa H."/>
        </authorList>
    </citation>
    <scope>NUCLEOTIDE SEQUENCE [LARGE SCALE GENOMIC DNA]</scope>
    <source>
        <strain>O157:H7 / Sakai / RIMD 0509952 / EHEC</strain>
    </source>
</reference>
<name>ENVR_ECO57</name>
<feature type="chain" id="PRO_0000070594" description="Probable acrEF/envCD operon repressor">
    <location>
        <begin position="1"/>
        <end position="220"/>
    </location>
</feature>
<feature type="domain" description="HTH tetR-type" evidence="2">
    <location>
        <begin position="10"/>
        <end position="70"/>
    </location>
</feature>
<feature type="DNA-binding region" description="H-T-H motif" evidence="2">
    <location>
        <begin position="33"/>
        <end position="52"/>
    </location>
</feature>
<protein>
    <recommendedName>
        <fullName>Probable acrEF/envCD operon repressor</fullName>
    </recommendedName>
</protein>
<sequence length="220" mass="25198">MAKRTKAEALKTRQELIETAIAQFAQHGVSKTTLNDIADAANVTRGAIYWHFENKTQLFNEMWLQQPSLRELIQEHLTAGLEHDPFQQLREKLIVGLQYIAKIPRQQALLKILYHKCEFNDEMLAEGVIREKMGFNPQTLREVLQACQQQGCVANNLDLDVVMIIIDGAFSGIVQNWLMNMAGYDLYKQAPALVDNVLRMFMPDENITKLIHQTNELSVM</sequence>
<comment type="function">
    <text evidence="1">Potential regulator protein for the acrEF/envCD genes.</text>
</comment>
<organism>
    <name type="scientific">Escherichia coli O157:H7</name>
    <dbReference type="NCBI Taxonomy" id="83334"/>
    <lineage>
        <taxon>Bacteria</taxon>
        <taxon>Pseudomonadati</taxon>
        <taxon>Pseudomonadota</taxon>
        <taxon>Gammaproteobacteria</taxon>
        <taxon>Enterobacterales</taxon>
        <taxon>Enterobacteriaceae</taxon>
        <taxon>Escherichia</taxon>
    </lineage>
</organism>
<keyword id="KW-0238">DNA-binding</keyword>
<keyword id="KW-1185">Reference proteome</keyword>
<keyword id="KW-0678">Repressor</keyword>
<keyword id="KW-0804">Transcription</keyword>
<keyword id="KW-0805">Transcription regulation</keyword>
<dbReference type="EMBL" id="AE005174">
    <property type="protein sequence ID" value="AAG58392.1"/>
    <property type="molecule type" value="Genomic_DNA"/>
</dbReference>
<dbReference type="EMBL" id="BA000007">
    <property type="protein sequence ID" value="BAB37559.1"/>
    <property type="molecule type" value="Genomic_DNA"/>
</dbReference>
<dbReference type="PIR" id="D85991">
    <property type="entry name" value="D85991"/>
</dbReference>
<dbReference type="PIR" id="H91145">
    <property type="entry name" value="H91145"/>
</dbReference>
<dbReference type="SMR" id="P0ACT3"/>
<dbReference type="KEGG" id="ece:Z4624"/>
<dbReference type="KEGG" id="ecs:ECs_4136"/>
<dbReference type="PATRIC" id="fig|386585.9.peg.4319"/>
<dbReference type="eggNOG" id="COG1309">
    <property type="taxonomic scope" value="Bacteria"/>
</dbReference>
<dbReference type="HOGENOM" id="CLU_069356_12_3_6"/>
<dbReference type="OMA" id="QQGCIAN"/>
<dbReference type="Proteomes" id="UP000000558">
    <property type="component" value="Chromosome"/>
</dbReference>
<dbReference type="Proteomes" id="UP000002519">
    <property type="component" value="Chromosome"/>
</dbReference>
<dbReference type="GO" id="GO:0003677">
    <property type="term" value="F:DNA binding"/>
    <property type="evidence" value="ECO:0007669"/>
    <property type="project" value="UniProtKB-KW"/>
</dbReference>
<dbReference type="FunFam" id="1.10.357.10:FF:000003">
    <property type="entry name" value="HTH-type transcriptional regulator AcrR"/>
    <property type="match status" value="1"/>
</dbReference>
<dbReference type="Gene3D" id="1.10.357.10">
    <property type="entry name" value="Tetracycline Repressor, domain 2"/>
    <property type="match status" value="1"/>
</dbReference>
<dbReference type="InterPro" id="IPR023772">
    <property type="entry name" value="DNA-bd_HTH_TetR-type_CS"/>
</dbReference>
<dbReference type="InterPro" id="IPR009057">
    <property type="entry name" value="Homeodomain-like_sf"/>
</dbReference>
<dbReference type="InterPro" id="IPR050624">
    <property type="entry name" value="HTH-type_Tx_Regulator"/>
</dbReference>
<dbReference type="InterPro" id="IPR001647">
    <property type="entry name" value="HTH_TetR"/>
</dbReference>
<dbReference type="InterPro" id="IPR036271">
    <property type="entry name" value="Tet_transcr_reg_TetR-rel_C_sf"/>
</dbReference>
<dbReference type="InterPro" id="IPR013572">
    <property type="entry name" value="Tscrpt_reg_MAATS_C"/>
</dbReference>
<dbReference type="NCBIfam" id="NF007430">
    <property type="entry name" value="PRK09975.1"/>
    <property type="match status" value="1"/>
</dbReference>
<dbReference type="PANTHER" id="PTHR43479">
    <property type="entry name" value="ACREF/ENVCD OPERON REPRESSOR-RELATED"/>
    <property type="match status" value="1"/>
</dbReference>
<dbReference type="PANTHER" id="PTHR43479:SF11">
    <property type="entry name" value="ACREF_ENVCD OPERON REPRESSOR-RELATED"/>
    <property type="match status" value="1"/>
</dbReference>
<dbReference type="Pfam" id="PF08361">
    <property type="entry name" value="TetR_C_2"/>
    <property type="match status" value="1"/>
</dbReference>
<dbReference type="Pfam" id="PF00440">
    <property type="entry name" value="TetR_N"/>
    <property type="match status" value="1"/>
</dbReference>
<dbReference type="PRINTS" id="PR00455">
    <property type="entry name" value="HTHTETR"/>
</dbReference>
<dbReference type="SUPFAM" id="SSF46689">
    <property type="entry name" value="Homeodomain-like"/>
    <property type="match status" value="1"/>
</dbReference>
<dbReference type="SUPFAM" id="SSF48498">
    <property type="entry name" value="Tetracyclin repressor-like, C-terminal domain"/>
    <property type="match status" value="1"/>
</dbReference>
<dbReference type="PROSITE" id="PS01081">
    <property type="entry name" value="HTH_TETR_1"/>
    <property type="match status" value="1"/>
</dbReference>
<dbReference type="PROSITE" id="PS50977">
    <property type="entry name" value="HTH_TETR_2"/>
    <property type="match status" value="1"/>
</dbReference>
<proteinExistence type="inferred from homology"/>
<accession>P0ACT3</accession>
<accession>P31676</accession>